<accession>Q1JF16</accession>
<protein>
    <recommendedName>
        <fullName evidence="1">CTP synthase</fullName>
        <ecNumber evidence="1">6.3.4.2</ecNumber>
    </recommendedName>
    <alternativeName>
        <fullName evidence="1">Cytidine 5'-triphosphate synthase</fullName>
    </alternativeName>
    <alternativeName>
        <fullName evidence="1">Cytidine triphosphate synthetase</fullName>
        <shortName evidence="1">CTP synthetase</shortName>
        <shortName evidence="1">CTPS</shortName>
    </alternativeName>
    <alternativeName>
        <fullName evidence="1">UTP--ammonia ligase</fullName>
    </alternativeName>
</protein>
<proteinExistence type="inferred from homology"/>
<evidence type="ECO:0000255" key="1">
    <source>
        <dbReference type="HAMAP-Rule" id="MF_01227"/>
    </source>
</evidence>
<dbReference type="EC" id="6.3.4.2" evidence="1"/>
<dbReference type="EMBL" id="CP000260">
    <property type="protein sequence ID" value="ABF34743.1"/>
    <property type="molecule type" value="Genomic_DNA"/>
</dbReference>
<dbReference type="SMR" id="Q1JF16"/>
<dbReference type="MEROPS" id="C26.964"/>
<dbReference type="KEGG" id="sph:MGAS10270_Spy1678"/>
<dbReference type="HOGENOM" id="CLU_011675_5_0_9"/>
<dbReference type="UniPathway" id="UPA00159">
    <property type="reaction ID" value="UER00277"/>
</dbReference>
<dbReference type="Proteomes" id="UP000002436">
    <property type="component" value="Chromosome"/>
</dbReference>
<dbReference type="GO" id="GO:0005829">
    <property type="term" value="C:cytosol"/>
    <property type="evidence" value="ECO:0007669"/>
    <property type="project" value="TreeGrafter"/>
</dbReference>
<dbReference type="GO" id="GO:0005524">
    <property type="term" value="F:ATP binding"/>
    <property type="evidence" value="ECO:0007669"/>
    <property type="project" value="UniProtKB-KW"/>
</dbReference>
<dbReference type="GO" id="GO:0003883">
    <property type="term" value="F:CTP synthase activity"/>
    <property type="evidence" value="ECO:0007669"/>
    <property type="project" value="UniProtKB-UniRule"/>
</dbReference>
<dbReference type="GO" id="GO:0004359">
    <property type="term" value="F:glutaminase activity"/>
    <property type="evidence" value="ECO:0007669"/>
    <property type="project" value="RHEA"/>
</dbReference>
<dbReference type="GO" id="GO:0042802">
    <property type="term" value="F:identical protein binding"/>
    <property type="evidence" value="ECO:0007669"/>
    <property type="project" value="TreeGrafter"/>
</dbReference>
<dbReference type="GO" id="GO:0046872">
    <property type="term" value="F:metal ion binding"/>
    <property type="evidence" value="ECO:0007669"/>
    <property type="project" value="UniProtKB-KW"/>
</dbReference>
<dbReference type="GO" id="GO:0044210">
    <property type="term" value="P:'de novo' CTP biosynthetic process"/>
    <property type="evidence" value="ECO:0007669"/>
    <property type="project" value="UniProtKB-UniRule"/>
</dbReference>
<dbReference type="GO" id="GO:0019856">
    <property type="term" value="P:pyrimidine nucleobase biosynthetic process"/>
    <property type="evidence" value="ECO:0007669"/>
    <property type="project" value="TreeGrafter"/>
</dbReference>
<dbReference type="CDD" id="cd03113">
    <property type="entry name" value="CTPS_N"/>
    <property type="match status" value="1"/>
</dbReference>
<dbReference type="CDD" id="cd01746">
    <property type="entry name" value="GATase1_CTP_Synthase"/>
    <property type="match status" value="1"/>
</dbReference>
<dbReference type="FunFam" id="3.40.50.300:FF:000009">
    <property type="entry name" value="CTP synthase"/>
    <property type="match status" value="1"/>
</dbReference>
<dbReference type="FunFam" id="3.40.50.880:FF:000002">
    <property type="entry name" value="CTP synthase"/>
    <property type="match status" value="1"/>
</dbReference>
<dbReference type="Gene3D" id="3.40.50.880">
    <property type="match status" value="1"/>
</dbReference>
<dbReference type="Gene3D" id="3.40.50.300">
    <property type="entry name" value="P-loop containing nucleotide triphosphate hydrolases"/>
    <property type="match status" value="1"/>
</dbReference>
<dbReference type="HAMAP" id="MF_01227">
    <property type="entry name" value="PyrG"/>
    <property type="match status" value="1"/>
</dbReference>
<dbReference type="InterPro" id="IPR029062">
    <property type="entry name" value="Class_I_gatase-like"/>
</dbReference>
<dbReference type="InterPro" id="IPR004468">
    <property type="entry name" value="CTP_synthase"/>
</dbReference>
<dbReference type="InterPro" id="IPR017456">
    <property type="entry name" value="CTP_synthase_N"/>
</dbReference>
<dbReference type="InterPro" id="IPR017926">
    <property type="entry name" value="GATASE"/>
</dbReference>
<dbReference type="InterPro" id="IPR033828">
    <property type="entry name" value="GATase1_CTP_Synthase"/>
</dbReference>
<dbReference type="InterPro" id="IPR027417">
    <property type="entry name" value="P-loop_NTPase"/>
</dbReference>
<dbReference type="NCBIfam" id="NF003792">
    <property type="entry name" value="PRK05380.1"/>
    <property type="match status" value="1"/>
</dbReference>
<dbReference type="NCBIfam" id="TIGR00337">
    <property type="entry name" value="PyrG"/>
    <property type="match status" value="1"/>
</dbReference>
<dbReference type="PANTHER" id="PTHR11550">
    <property type="entry name" value="CTP SYNTHASE"/>
    <property type="match status" value="1"/>
</dbReference>
<dbReference type="PANTHER" id="PTHR11550:SF0">
    <property type="entry name" value="CTP SYNTHASE-RELATED"/>
    <property type="match status" value="1"/>
</dbReference>
<dbReference type="Pfam" id="PF06418">
    <property type="entry name" value="CTP_synth_N"/>
    <property type="match status" value="1"/>
</dbReference>
<dbReference type="Pfam" id="PF00117">
    <property type="entry name" value="GATase"/>
    <property type="match status" value="1"/>
</dbReference>
<dbReference type="SUPFAM" id="SSF52317">
    <property type="entry name" value="Class I glutamine amidotransferase-like"/>
    <property type="match status" value="1"/>
</dbReference>
<dbReference type="SUPFAM" id="SSF52540">
    <property type="entry name" value="P-loop containing nucleoside triphosphate hydrolases"/>
    <property type="match status" value="1"/>
</dbReference>
<dbReference type="PROSITE" id="PS51273">
    <property type="entry name" value="GATASE_TYPE_1"/>
    <property type="match status" value="1"/>
</dbReference>
<organism>
    <name type="scientific">Streptococcus pyogenes serotype M2 (strain MGAS10270)</name>
    <dbReference type="NCBI Taxonomy" id="370552"/>
    <lineage>
        <taxon>Bacteria</taxon>
        <taxon>Bacillati</taxon>
        <taxon>Bacillota</taxon>
        <taxon>Bacilli</taxon>
        <taxon>Lactobacillales</taxon>
        <taxon>Streptococcaceae</taxon>
        <taxon>Streptococcus</taxon>
    </lineage>
</organism>
<gene>
    <name evidence="1" type="primary">pyrG</name>
    <name type="ordered locus">MGAS10270_Spy1678</name>
</gene>
<name>PYRG_STRPD</name>
<reference key="1">
    <citation type="journal article" date="2006" name="Proc. Natl. Acad. Sci. U.S.A.">
        <title>Molecular genetic anatomy of inter- and intraserotype variation in the human bacterial pathogen group A Streptococcus.</title>
        <authorList>
            <person name="Beres S.B."/>
            <person name="Richter E.W."/>
            <person name="Nagiec M.J."/>
            <person name="Sumby P."/>
            <person name="Porcella S.F."/>
            <person name="DeLeo F.R."/>
            <person name="Musser J.M."/>
        </authorList>
    </citation>
    <scope>NUCLEOTIDE SEQUENCE [LARGE SCALE GENOMIC DNA]</scope>
    <source>
        <strain>MGAS10270</strain>
    </source>
</reference>
<sequence>MTKYIFVTGGVVSSIGKGIVAASLGRLLKNRGLKVTIQKFDPYINIDPGTMSPYQHGEVYVTDDGAETDLDLGHYERFIDINLNKYSNVTTGKIYSEVLRKERKGEYLGATVQVIPHITDALKEKIKRAASTTDSDVIITEVGGTVGDIESLPFLEALRQMKTDVGSENVMYIHTTLLPYLKAAGEMKTKPTQHSVKELRGLGIQPNMLVIRTEEPVEQGIKNKLAQFCDVNSEAVIESRDVEHLYQIPLNLQAQSMDQIVCDHLKLNAPQADMTEWSAMVDKVMNLRKTTKIALVGKYVELPDAYLSVVEALKHSGYANDTAIDLKWVNANDVTVDNAADLLGDADGIIVPGGFGQRGTEGKIQAIRYARENDVPMLGICLGMQLTCVEFARHVLNMEGANSFELEPSTKYPIIDIMRDQIDIEDMGGTLRLGLYPCKLKPGSKAAMAYNNQEVVQRRHRHRYEFNNKFRPEFEAAGFVFSGVSPDNRLVEIVELKEKKFFVAAQYHPELQSRPNRPEELYTAFVTAAIKNSN</sequence>
<keyword id="KW-0067">ATP-binding</keyword>
<keyword id="KW-0315">Glutamine amidotransferase</keyword>
<keyword id="KW-0436">Ligase</keyword>
<keyword id="KW-0460">Magnesium</keyword>
<keyword id="KW-0479">Metal-binding</keyword>
<keyword id="KW-0547">Nucleotide-binding</keyword>
<keyword id="KW-0665">Pyrimidine biosynthesis</keyword>
<feature type="chain" id="PRO_0000266233" description="CTP synthase">
    <location>
        <begin position="1"/>
        <end position="534"/>
    </location>
</feature>
<feature type="domain" description="Glutamine amidotransferase type-1" evidence="1">
    <location>
        <begin position="292"/>
        <end position="534"/>
    </location>
</feature>
<feature type="region of interest" description="Amidoligase domain" evidence="1">
    <location>
        <begin position="1"/>
        <end position="267"/>
    </location>
</feature>
<feature type="active site" description="Nucleophile; for glutamine hydrolysis" evidence="1">
    <location>
        <position position="381"/>
    </location>
</feature>
<feature type="active site" evidence="1">
    <location>
        <position position="508"/>
    </location>
</feature>
<feature type="active site" evidence="1">
    <location>
        <position position="510"/>
    </location>
</feature>
<feature type="binding site" evidence="1">
    <location>
        <position position="13"/>
    </location>
    <ligand>
        <name>CTP</name>
        <dbReference type="ChEBI" id="CHEBI:37563"/>
        <note>allosteric inhibitor</note>
    </ligand>
</feature>
<feature type="binding site" evidence="1">
    <location>
        <position position="13"/>
    </location>
    <ligand>
        <name>UTP</name>
        <dbReference type="ChEBI" id="CHEBI:46398"/>
    </ligand>
</feature>
<feature type="binding site" evidence="1">
    <location>
        <begin position="14"/>
        <end position="19"/>
    </location>
    <ligand>
        <name>ATP</name>
        <dbReference type="ChEBI" id="CHEBI:30616"/>
    </ligand>
</feature>
<feature type="binding site" evidence="1">
    <location>
        <position position="54"/>
    </location>
    <ligand>
        <name>L-glutamine</name>
        <dbReference type="ChEBI" id="CHEBI:58359"/>
    </ligand>
</feature>
<feature type="binding site" evidence="1">
    <location>
        <position position="71"/>
    </location>
    <ligand>
        <name>ATP</name>
        <dbReference type="ChEBI" id="CHEBI:30616"/>
    </ligand>
</feature>
<feature type="binding site" evidence="1">
    <location>
        <position position="71"/>
    </location>
    <ligand>
        <name>Mg(2+)</name>
        <dbReference type="ChEBI" id="CHEBI:18420"/>
    </ligand>
</feature>
<feature type="binding site" evidence="1">
    <location>
        <position position="141"/>
    </location>
    <ligand>
        <name>Mg(2+)</name>
        <dbReference type="ChEBI" id="CHEBI:18420"/>
    </ligand>
</feature>
<feature type="binding site" evidence="1">
    <location>
        <begin position="148"/>
        <end position="150"/>
    </location>
    <ligand>
        <name>CTP</name>
        <dbReference type="ChEBI" id="CHEBI:37563"/>
        <note>allosteric inhibitor</note>
    </ligand>
</feature>
<feature type="binding site" evidence="1">
    <location>
        <begin position="188"/>
        <end position="193"/>
    </location>
    <ligand>
        <name>CTP</name>
        <dbReference type="ChEBI" id="CHEBI:37563"/>
        <note>allosteric inhibitor</note>
    </ligand>
</feature>
<feature type="binding site" evidence="1">
    <location>
        <begin position="188"/>
        <end position="193"/>
    </location>
    <ligand>
        <name>UTP</name>
        <dbReference type="ChEBI" id="CHEBI:46398"/>
    </ligand>
</feature>
<feature type="binding site" evidence="1">
    <location>
        <position position="224"/>
    </location>
    <ligand>
        <name>CTP</name>
        <dbReference type="ChEBI" id="CHEBI:37563"/>
        <note>allosteric inhibitor</note>
    </ligand>
</feature>
<feature type="binding site" evidence="1">
    <location>
        <position position="224"/>
    </location>
    <ligand>
        <name>UTP</name>
        <dbReference type="ChEBI" id="CHEBI:46398"/>
    </ligand>
</feature>
<feature type="binding site" evidence="1">
    <location>
        <begin position="240"/>
        <end position="242"/>
    </location>
    <ligand>
        <name>ATP</name>
        <dbReference type="ChEBI" id="CHEBI:30616"/>
    </ligand>
</feature>
<feature type="binding site" evidence="1">
    <location>
        <position position="354"/>
    </location>
    <ligand>
        <name>L-glutamine</name>
        <dbReference type="ChEBI" id="CHEBI:58359"/>
    </ligand>
</feature>
<feature type="binding site" evidence="1">
    <location>
        <begin position="382"/>
        <end position="385"/>
    </location>
    <ligand>
        <name>L-glutamine</name>
        <dbReference type="ChEBI" id="CHEBI:58359"/>
    </ligand>
</feature>
<feature type="binding site" evidence="1">
    <location>
        <position position="405"/>
    </location>
    <ligand>
        <name>L-glutamine</name>
        <dbReference type="ChEBI" id="CHEBI:58359"/>
    </ligand>
</feature>
<feature type="binding site" evidence="1">
    <location>
        <position position="463"/>
    </location>
    <ligand>
        <name>L-glutamine</name>
        <dbReference type="ChEBI" id="CHEBI:58359"/>
    </ligand>
</feature>
<comment type="function">
    <text evidence="1">Catalyzes the ATP-dependent amination of UTP to CTP with either L-glutamine or ammonia as the source of nitrogen. Regulates intracellular CTP levels through interactions with the four ribonucleotide triphosphates.</text>
</comment>
<comment type="catalytic activity">
    <reaction evidence="1">
        <text>UTP + L-glutamine + ATP + H2O = CTP + L-glutamate + ADP + phosphate + 2 H(+)</text>
        <dbReference type="Rhea" id="RHEA:26426"/>
        <dbReference type="ChEBI" id="CHEBI:15377"/>
        <dbReference type="ChEBI" id="CHEBI:15378"/>
        <dbReference type="ChEBI" id="CHEBI:29985"/>
        <dbReference type="ChEBI" id="CHEBI:30616"/>
        <dbReference type="ChEBI" id="CHEBI:37563"/>
        <dbReference type="ChEBI" id="CHEBI:43474"/>
        <dbReference type="ChEBI" id="CHEBI:46398"/>
        <dbReference type="ChEBI" id="CHEBI:58359"/>
        <dbReference type="ChEBI" id="CHEBI:456216"/>
        <dbReference type="EC" id="6.3.4.2"/>
    </reaction>
</comment>
<comment type="catalytic activity">
    <reaction evidence="1">
        <text>L-glutamine + H2O = L-glutamate + NH4(+)</text>
        <dbReference type="Rhea" id="RHEA:15889"/>
        <dbReference type="ChEBI" id="CHEBI:15377"/>
        <dbReference type="ChEBI" id="CHEBI:28938"/>
        <dbReference type="ChEBI" id="CHEBI:29985"/>
        <dbReference type="ChEBI" id="CHEBI:58359"/>
    </reaction>
</comment>
<comment type="catalytic activity">
    <reaction evidence="1">
        <text>UTP + NH4(+) + ATP = CTP + ADP + phosphate + 2 H(+)</text>
        <dbReference type="Rhea" id="RHEA:16597"/>
        <dbReference type="ChEBI" id="CHEBI:15378"/>
        <dbReference type="ChEBI" id="CHEBI:28938"/>
        <dbReference type="ChEBI" id="CHEBI:30616"/>
        <dbReference type="ChEBI" id="CHEBI:37563"/>
        <dbReference type="ChEBI" id="CHEBI:43474"/>
        <dbReference type="ChEBI" id="CHEBI:46398"/>
        <dbReference type="ChEBI" id="CHEBI:456216"/>
    </reaction>
</comment>
<comment type="activity regulation">
    <text evidence="1">Allosterically activated by GTP, when glutamine is the substrate; GTP has no effect on the reaction when ammonia is the substrate. The allosteric effector GTP functions by stabilizing the protein conformation that binds the tetrahedral intermediate(s) formed during glutamine hydrolysis. Inhibited by the product CTP, via allosteric rather than competitive inhibition.</text>
</comment>
<comment type="pathway">
    <text evidence="1">Pyrimidine metabolism; CTP biosynthesis via de novo pathway; CTP from UDP: step 2/2.</text>
</comment>
<comment type="subunit">
    <text evidence="1">Homotetramer.</text>
</comment>
<comment type="miscellaneous">
    <text evidence="1">CTPSs have evolved a hybrid strategy for distinguishing between UTP and CTP. The overlapping regions of the product feedback inhibitory and substrate sites recognize a common feature in both compounds, the triphosphate moiety. To differentiate isosteric substrate and product pyrimidine rings, an additional pocket far from the expected kinase/ligase catalytic site, specifically recognizes the cytosine and ribose portions of the product inhibitor.</text>
</comment>
<comment type="similarity">
    <text evidence="1">Belongs to the CTP synthase family.</text>
</comment>